<keyword id="KW-0030">Aminoacyl-tRNA synthetase</keyword>
<keyword id="KW-0067">ATP-binding</keyword>
<keyword id="KW-0963">Cytoplasm</keyword>
<keyword id="KW-0436">Ligase</keyword>
<keyword id="KW-0547">Nucleotide-binding</keyword>
<keyword id="KW-0648">Protein biosynthesis</keyword>
<keyword id="KW-1185">Reference proteome</keyword>
<feature type="chain" id="PRO_1000051402" description="Asparagine--tRNA ligase">
    <location>
        <begin position="1"/>
        <end position="432"/>
    </location>
</feature>
<protein>
    <recommendedName>
        <fullName evidence="1">Asparagine--tRNA ligase</fullName>
        <ecNumber evidence="1">6.1.1.22</ecNumber>
    </recommendedName>
    <alternativeName>
        <fullName evidence="1">Asparaginyl-tRNA synthetase</fullName>
        <shortName evidence="1">AsnRS</shortName>
    </alternativeName>
</protein>
<sequence length="432" mass="50091">MTEQIRIIDAKEHVNEEVKIGAWLTDKRSSGKITFLQLRDGSAYFQGVVSKADVPEEVFSLAKELRQESSMWITGVIHQDSRSHFGYEIEVRNIELVGDSHDYPISPKEHGIEFLLDHRHLWLRSKRQFAIQQIRNEMIRATFEFFNNEGFIKMDPPILTDSAPEGTTELFETDYFDKKAYLSQSGQLYAEAGAMAYGKVFTCGPVFRAEKSKTRRHLTEFWMIEPEMAFCHQEESLKVQERYVAYLVQSVLDNCAYPLHLLDRDPEVLKQYTKLPYPRITYKQAIKMLQDAGMDVKYGDDFGSPEETYLSDQFDQPVFVLNYPKTIKPFYMLTDPEDDQQYVCADMLAPEGYGEIIGGSERETDYDTLKNAIEHAGLDLDEYEWYLDLRKYGSVPHSGFGLGLERAITWVCKLDHLREAIPFPRMINRLKP</sequence>
<gene>
    <name evidence="1" type="primary">asnS</name>
    <name type="ordered locus">LSEI_1485</name>
</gene>
<comment type="catalytic activity">
    <reaction evidence="1">
        <text>tRNA(Asn) + L-asparagine + ATP = L-asparaginyl-tRNA(Asn) + AMP + diphosphate + H(+)</text>
        <dbReference type="Rhea" id="RHEA:11180"/>
        <dbReference type="Rhea" id="RHEA-COMP:9659"/>
        <dbReference type="Rhea" id="RHEA-COMP:9674"/>
        <dbReference type="ChEBI" id="CHEBI:15378"/>
        <dbReference type="ChEBI" id="CHEBI:30616"/>
        <dbReference type="ChEBI" id="CHEBI:33019"/>
        <dbReference type="ChEBI" id="CHEBI:58048"/>
        <dbReference type="ChEBI" id="CHEBI:78442"/>
        <dbReference type="ChEBI" id="CHEBI:78515"/>
        <dbReference type="ChEBI" id="CHEBI:456215"/>
        <dbReference type="EC" id="6.1.1.22"/>
    </reaction>
</comment>
<comment type="subunit">
    <text evidence="1">Homodimer.</text>
</comment>
<comment type="subcellular location">
    <subcellularLocation>
        <location evidence="1">Cytoplasm</location>
    </subcellularLocation>
</comment>
<comment type="similarity">
    <text evidence="1">Belongs to the class-II aminoacyl-tRNA synthetase family.</text>
</comment>
<reference key="1">
    <citation type="journal article" date="2006" name="Proc. Natl. Acad. Sci. U.S.A.">
        <title>Comparative genomics of the lactic acid bacteria.</title>
        <authorList>
            <person name="Makarova K.S."/>
            <person name="Slesarev A."/>
            <person name="Wolf Y.I."/>
            <person name="Sorokin A."/>
            <person name="Mirkin B."/>
            <person name="Koonin E.V."/>
            <person name="Pavlov A."/>
            <person name="Pavlova N."/>
            <person name="Karamychev V."/>
            <person name="Polouchine N."/>
            <person name="Shakhova V."/>
            <person name="Grigoriev I."/>
            <person name="Lou Y."/>
            <person name="Rohksar D."/>
            <person name="Lucas S."/>
            <person name="Huang K."/>
            <person name="Goodstein D.M."/>
            <person name="Hawkins T."/>
            <person name="Plengvidhya V."/>
            <person name="Welker D."/>
            <person name="Hughes J."/>
            <person name="Goh Y."/>
            <person name="Benson A."/>
            <person name="Baldwin K."/>
            <person name="Lee J.-H."/>
            <person name="Diaz-Muniz I."/>
            <person name="Dosti B."/>
            <person name="Smeianov V."/>
            <person name="Wechter W."/>
            <person name="Barabote R."/>
            <person name="Lorca G."/>
            <person name="Altermann E."/>
            <person name="Barrangou R."/>
            <person name="Ganesan B."/>
            <person name="Xie Y."/>
            <person name="Rawsthorne H."/>
            <person name="Tamir D."/>
            <person name="Parker C."/>
            <person name="Breidt F."/>
            <person name="Broadbent J.R."/>
            <person name="Hutkins R."/>
            <person name="O'Sullivan D."/>
            <person name="Steele J."/>
            <person name="Unlu G."/>
            <person name="Saier M.H. Jr."/>
            <person name="Klaenhammer T."/>
            <person name="Richardson P."/>
            <person name="Kozyavkin S."/>
            <person name="Weimer B.C."/>
            <person name="Mills D.A."/>
        </authorList>
    </citation>
    <scope>NUCLEOTIDE SEQUENCE [LARGE SCALE GENOMIC DNA]</scope>
    <source>
        <strain>ATCC 334 / BCRC 17002 / CCUG 31169 / CIP 107868 / KCTC 3260 / NRRL B-441</strain>
    </source>
</reference>
<proteinExistence type="inferred from homology"/>
<organism>
    <name type="scientific">Lacticaseibacillus paracasei (strain ATCC 334 / BCRC 17002 / CCUG 31169 / CIP 107868 / KCTC 3260 / NRRL B-441)</name>
    <name type="common">Lactobacillus paracasei</name>
    <dbReference type="NCBI Taxonomy" id="321967"/>
    <lineage>
        <taxon>Bacteria</taxon>
        <taxon>Bacillati</taxon>
        <taxon>Bacillota</taxon>
        <taxon>Bacilli</taxon>
        <taxon>Lactobacillales</taxon>
        <taxon>Lactobacillaceae</taxon>
        <taxon>Lacticaseibacillus</taxon>
    </lineage>
</organism>
<name>SYN_LACP3</name>
<evidence type="ECO:0000255" key="1">
    <source>
        <dbReference type="HAMAP-Rule" id="MF_00534"/>
    </source>
</evidence>
<dbReference type="EC" id="6.1.1.22" evidence="1"/>
<dbReference type="EMBL" id="CP000423">
    <property type="protein sequence ID" value="ABJ70261.1"/>
    <property type="molecule type" value="Genomic_DNA"/>
</dbReference>
<dbReference type="RefSeq" id="WP_003660869.1">
    <property type="nucleotide sequence ID" value="NC_008526.1"/>
</dbReference>
<dbReference type="RefSeq" id="YP_806703.1">
    <property type="nucleotide sequence ID" value="NC_008526.1"/>
</dbReference>
<dbReference type="SMR" id="Q038W1"/>
<dbReference type="STRING" id="321967.LSEI_1485"/>
<dbReference type="PaxDb" id="321967-LSEI_1485"/>
<dbReference type="KEGG" id="lca:LSEI_1485"/>
<dbReference type="PATRIC" id="fig|321967.11.peg.1466"/>
<dbReference type="HOGENOM" id="CLU_004553_2_0_9"/>
<dbReference type="Proteomes" id="UP000001651">
    <property type="component" value="Chromosome"/>
</dbReference>
<dbReference type="GO" id="GO:0005737">
    <property type="term" value="C:cytoplasm"/>
    <property type="evidence" value="ECO:0007669"/>
    <property type="project" value="UniProtKB-SubCell"/>
</dbReference>
<dbReference type="GO" id="GO:0004816">
    <property type="term" value="F:asparagine-tRNA ligase activity"/>
    <property type="evidence" value="ECO:0007669"/>
    <property type="project" value="UniProtKB-UniRule"/>
</dbReference>
<dbReference type="GO" id="GO:0005524">
    <property type="term" value="F:ATP binding"/>
    <property type="evidence" value="ECO:0007669"/>
    <property type="project" value="UniProtKB-UniRule"/>
</dbReference>
<dbReference type="GO" id="GO:0140096">
    <property type="term" value="F:catalytic activity, acting on a protein"/>
    <property type="evidence" value="ECO:0007669"/>
    <property type="project" value="UniProtKB-ARBA"/>
</dbReference>
<dbReference type="GO" id="GO:0003676">
    <property type="term" value="F:nucleic acid binding"/>
    <property type="evidence" value="ECO:0007669"/>
    <property type="project" value="InterPro"/>
</dbReference>
<dbReference type="GO" id="GO:0016740">
    <property type="term" value="F:transferase activity"/>
    <property type="evidence" value="ECO:0007669"/>
    <property type="project" value="UniProtKB-ARBA"/>
</dbReference>
<dbReference type="GO" id="GO:0006421">
    <property type="term" value="P:asparaginyl-tRNA aminoacylation"/>
    <property type="evidence" value="ECO:0007669"/>
    <property type="project" value="UniProtKB-UniRule"/>
</dbReference>
<dbReference type="CDD" id="cd04323">
    <property type="entry name" value="AsnRS_cyto_like_N"/>
    <property type="match status" value="1"/>
</dbReference>
<dbReference type="CDD" id="cd00776">
    <property type="entry name" value="AsxRS_core"/>
    <property type="match status" value="1"/>
</dbReference>
<dbReference type="Gene3D" id="3.30.930.10">
    <property type="entry name" value="Bira Bifunctional Protein, Domain 2"/>
    <property type="match status" value="1"/>
</dbReference>
<dbReference type="Gene3D" id="2.40.50.140">
    <property type="entry name" value="Nucleic acid-binding proteins"/>
    <property type="match status" value="1"/>
</dbReference>
<dbReference type="HAMAP" id="MF_00534">
    <property type="entry name" value="Asn_tRNA_synth"/>
    <property type="match status" value="1"/>
</dbReference>
<dbReference type="InterPro" id="IPR004364">
    <property type="entry name" value="Aa-tRNA-synt_II"/>
</dbReference>
<dbReference type="InterPro" id="IPR006195">
    <property type="entry name" value="aa-tRNA-synth_II"/>
</dbReference>
<dbReference type="InterPro" id="IPR045864">
    <property type="entry name" value="aa-tRNA-synth_II/BPL/LPL"/>
</dbReference>
<dbReference type="InterPro" id="IPR004522">
    <property type="entry name" value="Asn-tRNA-ligase"/>
</dbReference>
<dbReference type="InterPro" id="IPR002312">
    <property type="entry name" value="Asp/Asn-tRNA-synth_IIb"/>
</dbReference>
<dbReference type="InterPro" id="IPR012340">
    <property type="entry name" value="NA-bd_OB-fold"/>
</dbReference>
<dbReference type="InterPro" id="IPR004365">
    <property type="entry name" value="NA-bd_OB_tRNA"/>
</dbReference>
<dbReference type="NCBIfam" id="TIGR00457">
    <property type="entry name" value="asnS"/>
    <property type="match status" value="1"/>
</dbReference>
<dbReference type="NCBIfam" id="NF003037">
    <property type="entry name" value="PRK03932.1"/>
    <property type="match status" value="1"/>
</dbReference>
<dbReference type="PANTHER" id="PTHR22594:SF34">
    <property type="entry name" value="ASPARAGINE--TRNA LIGASE, MITOCHONDRIAL-RELATED"/>
    <property type="match status" value="1"/>
</dbReference>
<dbReference type="PANTHER" id="PTHR22594">
    <property type="entry name" value="ASPARTYL/LYSYL-TRNA SYNTHETASE"/>
    <property type="match status" value="1"/>
</dbReference>
<dbReference type="Pfam" id="PF00152">
    <property type="entry name" value="tRNA-synt_2"/>
    <property type="match status" value="1"/>
</dbReference>
<dbReference type="Pfam" id="PF01336">
    <property type="entry name" value="tRNA_anti-codon"/>
    <property type="match status" value="1"/>
</dbReference>
<dbReference type="PRINTS" id="PR01042">
    <property type="entry name" value="TRNASYNTHASP"/>
</dbReference>
<dbReference type="SUPFAM" id="SSF55681">
    <property type="entry name" value="Class II aaRS and biotin synthetases"/>
    <property type="match status" value="1"/>
</dbReference>
<dbReference type="SUPFAM" id="SSF50249">
    <property type="entry name" value="Nucleic acid-binding proteins"/>
    <property type="match status" value="1"/>
</dbReference>
<dbReference type="PROSITE" id="PS50862">
    <property type="entry name" value="AA_TRNA_LIGASE_II"/>
    <property type="match status" value="1"/>
</dbReference>
<accession>Q038W1</accession>